<protein>
    <recommendedName>
        <fullName>DNA ligase 1</fullName>
        <ecNumber evidence="4">6.5.1.1</ecNumber>
    </recommendedName>
    <alternativeName>
        <fullName>DNA ligase I</fullName>
    </alternativeName>
    <alternativeName>
        <fullName>Polydeoxyribonucleotide synthase [ATP] 1</fullName>
    </alternativeName>
</protein>
<evidence type="ECO:0000250" key="1"/>
<evidence type="ECO:0000250" key="2">
    <source>
        <dbReference type="UniProtKB" id="P12004"/>
    </source>
</evidence>
<evidence type="ECO:0000250" key="3">
    <source>
        <dbReference type="UniProtKB" id="P18858"/>
    </source>
</evidence>
<evidence type="ECO:0000255" key="4">
    <source>
        <dbReference type="PROSITE-ProRule" id="PRU10135"/>
    </source>
</evidence>
<evidence type="ECO:0000256" key="5">
    <source>
        <dbReference type="SAM" id="MobiDB-lite"/>
    </source>
</evidence>
<evidence type="ECO:0000305" key="6"/>
<evidence type="ECO:0007744" key="7">
    <source>
    </source>
</evidence>
<evidence type="ECO:0007744" key="8">
    <source>
    </source>
</evidence>
<evidence type="ECO:0007744" key="9">
    <source>
    </source>
</evidence>
<evidence type="ECO:0007744" key="10">
    <source>
    </source>
</evidence>
<evidence type="ECO:0007744" key="11">
    <source>
    </source>
</evidence>
<proteinExistence type="evidence at protein level"/>
<name>DNLI1_MOUSE</name>
<sequence>MQRSIMSFFQPTKEGKAKKPEKETPSSIREKEPPPKVALKERNQVVPESDSPVKRTGRKVAQVLSCEGEDEDEAPGTPKVQKPVSDSEQSSPPSPDTCPENSPVFNCSSPMDISPSGFPKRRTARKQLPKRTIQDTLEEQNEDKTKTAKKRKKEEETPKESLAEAEDIKQKEEKEGDQLIVPSEPTKSPESVTLTKTENIPVCKAGVKLKPQEEEQSKPPARGAKTLSSFFTPRKPAVKTEVKQEESGTLRKEETKGTLDPANYNPSKNNYHPIEDACWKHGQKVPFLAVARTFEKIEEVSARLKMVETLSNLLRSVVALSPPDLLPVLYLSLNRLGPPQQGLELGVGDGVLLKAVAQATGRQLESIRAEVAEKGDVGLVAENSRSTQRLMLPPPPLTISGVFTKFCDIARLTGSASMAKKMDIIKGLFVACRHSEARYIARSLSGRLRLGLAEQSVLAALAQAVSLTPPGQEFPTVVVDAGKGKTAEARKMWLEEQGMILKQTFCEVPDLDRIIPVLLEHGLERLPEHCKLSPGVPLKPMLAHPTRGVSEVLKRFEEVDFTCEYKYDGQRAQIHVLEGGEVKIFSRNQEDNTGKYPDIISRIPKIKHPSVTSFILDTEAVAWDREKKQIQPFQVLTTRKRKEVDASEIQVQVCLYAFDLIYLNGESLVRQPLSRRRQLLRENFVETEGEFVFTTSLDTKDTEQIAEFLEQSVKDSCEGLMVKTLDVDATYEIAKRSHNWLKLKKDYLDGVGDTLDLVVIGAYLGRGKRAGRYGGFLLAAYDEESEELQAICKLGTGFSDEELEEHHQSLQALVLPTPRPYVRIDGAVAPDHWLDPSIVWEVKCADLSLSPIYPAARGLVDKEKGISLRFPRFIRVRKDKQPEQATTSNQVASLYRKQSQIQNQQSSDLDSDVEDY</sequence>
<gene>
    <name type="primary">Lig1</name>
    <name type="synonym">Lig-1</name>
</gene>
<accession>P37913</accession>
<keyword id="KW-0007">Acetylation</keyword>
<keyword id="KW-0067">ATP-binding</keyword>
<keyword id="KW-0131">Cell cycle</keyword>
<keyword id="KW-0132">Cell division</keyword>
<keyword id="KW-0227">DNA damage</keyword>
<keyword id="KW-0233">DNA recombination</keyword>
<keyword id="KW-0234">DNA repair</keyword>
<keyword id="KW-0235">DNA replication</keyword>
<keyword id="KW-0436">Ligase</keyword>
<keyword id="KW-0460">Magnesium</keyword>
<keyword id="KW-0479">Metal-binding</keyword>
<keyword id="KW-0547">Nucleotide-binding</keyword>
<keyword id="KW-0539">Nucleus</keyword>
<keyword id="KW-0597">Phosphoprotein</keyword>
<keyword id="KW-1185">Reference proteome</keyword>
<comment type="function">
    <text evidence="3">DNA ligase that seals nicks in double-stranded during DNA repair. Also involved in DNA replication and DNA recombination.</text>
</comment>
<comment type="catalytic activity">
    <reaction evidence="4">
        <text>ATP + (deoxyribonucleotide)n-3'-hydroxyl + 5'-phospho-(deoxyribonucleotide)m = (deoxyribonucleotide)n+m + AMP + diphosphate.</text>
        <dbReference type="EC" id="6.5.1.1"/>
    </reaction>
</comment>
<comment type="cofactor">
    <cofactor evidence="1">
        <name>Mg(2+)</name>
        <dbReference type="ChEBI" id="CHEBI:18420"/>
    </cofactor>
</comment>
<comment type="subunit">
    <text evidence="2">Interacts with PCNA. Interacts with POLB.</text>
</comment>
<comment type="subcellular location">
    <subcellularLocation>
        <location>Nucleus</location>
    </subcellularLocation>
</comment>
<comment type="similarity">
    <text evidence="6">Belongs to the ATP-dependent DNA ligase family.</text>
</comment>
<reference key="1">
    <citation type="journal article" date="1994" name="Gene">
        <title>Cloning and sequence analysis of a cDNA coding for the murine DNA ligase I enzyme.</title>
        <authorList>
            <person name="Savini E."/>
            <person name="Biamonti G."/>
            <person name="Ciarrocchi G."/>
            <person name="Montecucco A."/>
        </authorList>
    </citation>
    <scope>NUCLEOTIDE SEQUENCE [MRNA]</scope>
    <source>
        <tissue>Fibroblast</tissue>
    </source>
</reference>
<reference key="2">
    <citation type="submission" date="1995-07" db="EMBL/GenBank/DDBJ databases">
        <authorList>
            <person name="Montecucco A."/>
        </authorList>
    </citation>
    <scope>SEQUENCE REVISION</scope>
</reference>
<reference key="3">
    <citation type="journal article" date="1995" name="Gene">
        <title>Comparison between cDNA clones encoding murine DNA ligase I.</title>
        <authorList>
            <person name="Jessop J.K."/>
            <person name="Melton D.W."/>
        </authorList>
    </citation>
    <scope>NUCLEOTIDE SEQUENCE [MRNA]</scope>
    <source>
        <strain>129/Ola</strain>
    </source>
</reference>
<reference key="4">
    <citation type="journal article" date="2007" name="Proc. Natl. Acad. Sci. U.S.A.">
        <title>Large-scale phosphorylation analysis of mouse liver.</title>
        <authorList>
            <person name="Villen J."/>
            <person name="Beausoleil S.A."/>
            <person name="Gerber S.A."/>
            <person name="Gygi S.P."/>
        </authorList>
    </citation>
    <scope>PHOSPHORYLATION [LARGE SCALE ANALYSIS] AT SER-51 AND SER-65</scope>
    <scope>IDENTIFICATION BY MASS SPECTROMETRY [LARGE SCALE ANALYSIS]</scope>
    <source>
        <tissue>Liver</tissue>
    </source>
</reference>
<reference key="5">
    <citation type="journal article" date="2009" name="Immunity">
        <title>The phagosomal proteome in interferon-gamma-activated macrophages.</title>
        <authorList>
            <person name="Trost M."/>
            <person name="English L."/>
            <person name="Lemieux S."/>
            <person name="Courcelles M."/>
            <person name="Desjardins M."/>
            <person name="Thibault P."/>
        </authorList>
    </citation>
    <scope>PHOSPHORYLATION [LARGE SCALE ANALYSIS] AT SER-51</scope>
    <scope>IDENTIFICATION BY MASS SPECTROMETRY [LARGE SCALE ANALYSIS]</scope>
</reference>
<reference key="6">
    <citation type="journal article" date="2009" name="Mol. Cell. Proteomics">
        <title>Large scale localization of protein phosphorylation by use of electron capture dissociation mass spectrometry.</title>
        <authorList>
            <person name="Sweet S.M."/>
            <person name="Bailey C.M."/>
            <person name="Cunningham D.L."/>
            <person name="Heath J.K."/>
            <person name="Cooper H.J."/>
        </authorList>
    </citation>
    <scope>PHOSPHORYLATION [LARGE SCALE ANALYSIS] AT SER-51</scope>
    <scope>IDENTIFICATION BY MASS SPECTROMETRY [LARGE SCALE ANALYSIS]</scope>
    <source>
        <tissue>Embryonic fibroblast</tissue>
    </source>
</reference>
<reference key="7">
    <citation type="journal article" date="2010" name="Cell">
        <title>A tissue-specific atlas of mouse protein phosphorylation and expression.</title>
        <authorList>
            <person name="Huttlin E.L."/>
            <person name="Jedrychowski M.P."/>
            <person name="Elias J.E."/>
            <person name="Goswami T."/>
            <person name="Rad R."/>
            <person name="Beausoleil S.A."/>
            <person name="Villen J."/>
            <person name="Haas W."/>
            <person name="Sowa M.E."/>
            <person name="Gygi S.P."/>
        </authorList>
    </citation>
    <scope>PHOSPHORYLATION [LARGE SCALE ANALYSIS] AT SER-51; SER-65; THR-77; SER-906; SER-907 AND SER-911</scope>
    <scope>IDENTIFICATION BY MASS SPECTROMETRY [LARGE SCALE ANALYSIS]</scope>
    <source>
        <tissue>Brown adipose tissue</tissue>
        <tissue>Heart</tissue>
        <tissue>Kidney</tissue>
        <tissue>Liver</tissue>
        <tissue>Lung</tissue>
        <tissue>Pancreas</tissue>
        <tissue>Spleen</tissue>
        <tissue>Testis</tissue>
    </source>
</reference>
<reference key="8">
    <citation type="journal article" date="2013" name="Mol. Cell">
        <title>SIRT5-mediated lysine desuccinylation impacts diverse metabolic pathways.</title>
        <authorList>
            <person name="Park J."/>
            <person name="Chen Y."/>
            <person name="Tishkoff D.X."/>
            <person name="Peng C."/>
            <person name="Tan M."/>
            <person name="Dai L."/>
            <person name="Xie Z."/>
            <person name="Zhang Y."/>
            <person name="Zwaans B.M."/>
            <person name="Skinner M.E."/>
            <person name="Lombard D.B."/>
            <person name="Zhao Y."/>
        </authorList>
    </citation>
    <scope>ACETYLATION [LARGE SCALE ANALYSIS] AT LYS-144 AND LYS-225</scope>
    <scope>IDENTIFICATION BY MASS SPECTROMETRY [LARGE SCALE ANALYSIS]</scope>
    <source>
        <tissue>Embryonic fibroblast</tissue>
    </source>
</reference>
<dbReference type="EC" id="6.5.1.1" evidence="4"/>
<dbReference type="EMBL" id="U04674">
    <property type="protein sequence ID" value="AAA70403.1"/>
    <property type="molecule type" value="mRNA"/>
</dbReference>
<dbReference type="EMBL" id="U19604">
    <property type="protein sequence ID" value="AAB60500.1"/>
    <property type="molecule type" value="mRNA"/>
</dbReference>
<dbReference type="PIR" id="I48921">
    <property type="entry name" value="I48921"/>
</dbReference>
<dbReference type="RefSeq" id="NP_034845.2">
    <property type="nucleotide sequence ID" value="NM_010715.2"/>
</dbReference>
<dbReference type="SMR" id="P37913"/>
<dbReference type="BioGRID" id="201164">
    <property type="interactions" value="12"/>
</dbReference>
<dbReference type="CORUM" id="P37913"/>
<dbReference type="FunCoup" id="P37913">
    <property type="interactions" value="2821"/>
</dbReference>
<dbReference type="STRING" id="10090.ENSMUSP00000136972"/>
<dbReference type="GlyGen" id="P37913">
    <property type="glycosylation" value="1 site, 1 O-linked glycan (1 site)"/>
</dbReference>
<dbReference type="iPTMnet" id="P37913"/>
<dbReference type="PhosphoSitePlus" id="P37913"/>
<dbReference type="SwissPalm" id="P37913"/>
<dbReference type="jPOST" id="P37913"/>
<dbReference type="PaxDb" id="10090-ENSMUSP00000136972"/>
<dbReference type="PeptideAtlas" id="P37913"/>
<dbReference type="ProteomicsDB" id="279462"/>
<dbReference type="Pumba" id="P37913"/>
<dbReference type="DNASU" id="16881"/>
<dbReference type="GeneID" id="16881"/>
<dbReference type="KEGG" id="mmu:16881"/>
<dbReference type="AGR" id="MGI:101789"/>
<dbReference type="CTD" id="3978"/>
<dbReference type="MGI" id="MGI:101789">
    <property type="gene designation" value="Lig1"/>
</dbReference>
<dbReference type="eggNOG" id="KOG0967">
    <property type="taxonomic scope" value="Eukaryota"/>
</dbReference>
<dbReference type="InParanoid" id="P37913"/>
<dbReference type="OrthoDB" id="206088at2759"/>
<dbReference type="Reactome" id="R-MMU-110362">
    <property type="pathway name" value="POLB-Dependent Long Patch Base Excision Repair"/>
</dbReference>
<dbReference type="Reactome" id="R-MMU-174414">
    <property type="pathway name" value="Processive synthesis on the C-strand of the telomere"/>
</dbReference>
<dbReference type="Reactome" id="R-MMU-5358565">
    <property type="pathway name" value="Mismatch repair (MMR) directed by MSH2:MSH6 (MutSalpha)"/>
</dbReference>
<dbReference type="Reactome" id="R-MMU-5358606">
    <property type="pathway name" value="Mismatch repair (MMR) directed by MSH2:MSH3 (MutSbeta)"/>
</dbReference>
<dbReference type="Reactome" id="R-MMU-5651801">
    <property type="pathway name" value="PCNA-Dependent Long Patch Base Excision Repair"/>
</dbReference>
<dbReference type="Reactome" id="R-MMU-6782210">
    <property type="pathway name" value="Gap-filling DNA repair synthesis and ligation in TC-NER"/>
</dbReference>
<dbReference type="Reactome" id="R-MMU-69183">
    <property type="pathway name" value="Processive synthesis on the lagging strand"/>
</dbReference>
<dbReference type="BioGRID-ORCS" id="16881">
    <property type="hits" value="13 hits in 108 CRISPR screens"/>
</dbReference>
<dbReference type="ChiTaRS" id="Lig1">
    <property type="organism name" value="mouse"/>
</dbReference>
<dbReference type="PRO" id="PR:P37913"/>
<dbReference type="Proteomes" id="UP000000589">
    <property type="component" value="Unplaced"/>
</dbReference>
<dbReference type="RNAct" id="P37913">
    <property type="molecule type" value="protein"/>
</dbReference>
<dbReference type="GO" id="GO:0005634">
    <property type="term" value="C:nucleus"/>
    <property type="evidence" value="ECO:0000314"/>
    <property type="project" value="MGI"/>
</dbReference>
<dbReference type="GO" id="GO:0005524">
    <property type="term" value="F:ATP binding"/>
    <property type="evidence" value="ECO:0007669"/>
    <property type="project" value="UniProtKB-KW"/>
</dbReference>
<dbReference type="GO" id="GO:0003677">
    <property type="term" value="F:DNA binding"/>
    <property type="evidence" value="ECO:0007669"/>
    <property type="project" value="InterPro"/>
</dbReference>
<dbReference type="GO" id="GO:0003910">
    <property type="term" value="F:DNA ligase (ATP) activity"/>
    <property type="evidence" value="ECO:0007669"/>
    <property type="project" value="UniProtKB-EC"/>
</dbReference>
<dbReference type="GO" id="GO:0046872">
    <property type="term" value="F:metal ion binding"/>
    <property type="evidence" value="ECO:0007669"/>
    <property type="project" value="UniProtKB-KW"/>
</dbReference>
<dbReference type="GO" id="GO:0051301">
    <property type="term" value="P:cell division"/>
    <property type="evidence" value="ECO:0007669"/>
    <property type="project" value="UniProtKB-KW"/>
</dbReference>
<dbReference type="GO" id="GO:0071897">
    <property type="term" value="P:DNA biosynthetic process"/>
    <property type="evidence" value="ECO:0007669"/>
    <property type="project" value="InterPro"/>
</dbReference>
<dbReference type="GO" id="GO:0006310">
    <property type="term" value="P:DNA recombination"/>
    <property type="evidence" value="ECO:0007669"/>
    <property type="project" value="UniProtKB-KW"/>
</dbReference>
<dbReference type="GO" id="GO:0006281">
    <property type="term" value="P:DNA repair"/>
    <property type="evidence" value="ECO:0000315"/>
    <property type="project" value="MGI"/>
</dbReference>
<dbReference type="GO" id="GO:0006260">
    <property type="term" value="P:DNA replication"/>
    <property type="evidence" value="ECO:0000315"/>
    <property type="project" value="MGI"/>
</dbReference>
<dbReference type="GO" id="GO:0006303">
    <property type="term" value="P:double-strand break repair via nonhomologous end joining"/>
    <property type="evidence" value="ECO:0000315"/>
    <property type="project" value="MGI"/>
</dbReference>
<dbReference type="GO" id="GO:0042542">
    <property type="term" value="P:response to hydrogen peroxide"/>
    <property type="evidence" value="ECO:0000315"/>
    <property type="project" value="MGI"/>
</dbReference>
<dbReference type="CDD" id="cd07900">
    <property type="entry name" value="Adenylation_DNA_ligase_I_Euk"/>
    <property type="match status" value="1"/>
</dbReference>
<dbReference type="CDD" id="cd07969">
    <property type="entry name" value="OBF_DNA_ligase_I"/>
    <property type="match status" value="1"/>
</dbReference>
<dbReference type="FunFam" id="1.10.3260.10:FF:000001">
    <property type="entry name" value="DNA ligase"/>
    <property type="match status" value="1"/>
</dbReference>
<dbReference type="FunFam" id="2.40.50.140:FF:000062">
    <property type="entry name" value="DNA ligase"/>
    <property type="match status" value="1"/>
</dbReference>
<dbReference type="FunFam" id="3.30.470.30:FF:000016">
    <property type="entry name" value="DNA ligase"/>
    <property type="match status" value="1"/>
</dbReference>
<dbReference type="Gene3D" id="3.30.1490.70">
    <property type="match status" value="1"/>
</dbReference>
<dbReference type="Gene3D" id="1.10.3260.10">
    <property type="entry name" value="DNA ligase, ATP-dependent, N-terminal domain"/>
    <property type="match status" value="1"/>
</dbReference>
<dbReference type="Gene3D" id="3.30.470.30">
    <property type="entry name" value="DNA ligase/mRNA capping enzyme"/>
    <property type="match status" value="1"/>
</dbReference>
<dbReference type="Gene3D" id="2.40.50.140">
    <property type="entry name" value="Nucleic acid-binding proteins"/>
    <property type="match status" value="1"/>
</dbReference>
<dbReference type="InterPro" id="IPR050191">
    <property type="entry name" value="ATP-dep_DNA_ligase"/>
</dbReference>
<dbReference type="InterPro" id="IPR000977">
    <property type="entry name" value="DNA_ligase_ATP-dep"/>
</dbReference>
<dbReference type="InterPro" id="IPR012309">
    <property type="entry name" value="DNA_ligase_ATP-dep_C"/>
</dbReference>
<dbReference type="InterPro" id="IPR012310">
    <property type="entry name" value="DNA_ligase_ATP-dep_cent"/>
</dbReference>
<dbReference type="InterPro" id="IPR016059">
    <property type="entry name" value="DNA_ligase_ATP-dep_CS"/>
</dbReference>
<dbReference type="InterPro" id="IPR012308">
    <property type="entry name" value="DNA_ligase_ATP-dep_N"/>
</dbReference>
<dbReference type="InterPro" id="IPR036599">
    <property type="entry name" value="DNA_ligase_N_sf"/>
</dbReference>
<dbReference type="InterPro" id="IPR012340">
    <property type="entry name" value="NA-bd_OB-fold"/>
</dbReference>
<dbReference type="NCBIfam" id="TIGR00574">
    <property type="entry name" value="dnl1"/>
    <property type="match status" value="1"/>
</dbReference>
<dbReference type="PANTHER" id="PTHR45674:SF4">
    <property type="entry name" value="DNA LIGASE 1"/>
    <property type="match status" value="1"/>
</dbReference>
<dbReference type="PANTHER" id="PTHR45674">
    <property type="entry name" value="DNA LIGASE 1/3 FAMILY MEMBER"/>
    <property type="match status" value="1"/>
</dbReference>
<dbReference type="Pfam" id="PF04679">
    <property type="entry name" value="DNA_ligase_A_C"/>
    <property type="match status" value="1"/>
</dbReference>
<dbReference type="Pfam" id="PF01068">
    <property type="entry name" value="DNA_ligase_A_M"/>
    <property type="match status" value="1"/>
</dbReference>
<dbReference type="Pfam" id="PF04675">
    <property type="entry name" value="DNA_ligase_A_N"/>
    <property type="match status" value="1"/>
</dbReference>
<dbReference type="SUPFAM" id="SSF117018">
    <property type="entry name" value="ATP-dependent DNA ligase DNA-binding domain"/>
    <property type="match status" value="1"/>
</dbReference>
<dbReference type="SUPFAM" id="SSF56091">
    <property type="entry name" value="DNA ligase/mRNA capping enzyme, catalytic domain"/>
    <property type="match status" value="1"/>
</dbReference>
<dbReference type="SUPFAM" id="SSF50249">
    <property type="entry name" value="Nucleic acid-binding proteins"/>
    <property type="match status" value="1"/>
</dbReference>
<dbReference type="PROSITE" id="PS00697">
    <property type="entry name" value="DNA_LIGASE_A1"/>
    <property type="match status" value="1"/>
</dbReference>
<dbReference type="PROSITE" id="PS00333">
    <property type="entry name" value="DNA_LIGASE_A2"/>
    <property type="match status" value="1"/>
</dbReference>
<dbReference type="PROSITE" id="PS50160">
    <property type="entry name" value="DNA_LIGASE_A3"/>
    <property type="match status" value="1"/>
</dbReference>
<organism>
    <name type="scientific">Mus musculus</name>
    <name type="common">Mouse</name>
    <dbReference type="NCBI Taxonomy" id="10090"/>
    <lineage>
        <taxon>Eukaryota</taxon>
        <taxon>Metazoa</taxon>
        <taxon>Chordata</taxon>
        <taxon>Craniata</taxon>
        <taxon>Vertebrata</taxon>
        <taxon>Euteleostomi</taxon>
        <taxon>Mammalia</taxon>
        <taxon>Eutheria</taxon>
        <taxon>Euarchontoglires</taxon>
        <taxon>Glires</taxon>
        <taxon>Rodentia</taxon>
        <taxon>Myomorpha</taxon>
        <taxon>Muroidea</taxon>
        <taxon>Muridae</taxon>
        <taxon>Murinae</taxon>
        <taxon>Mus</taxon>
        <taxon>Mus</taxon>
    </lineage>
</organism>
<feature type="chain" id="PRO_0000059571" description="DNA ligase 1">
    <location>
        <begin position="1"/>
        <end position="916"/>
    </location>
</feature>
<feature type="region of interest" description="Disordered" evidence="5">
    <location>
        <begin position="1"/>
        <end position="197"/>
    </location>
</feature>
<feature type="region of interest" description="Disordered" evidence="5">
    <location>
        <begin position="236"/>
        <end position="266"/>
    </location>
</feature>
<feature type="region of interest" description="Interaction with target DNA" evidence="1">
    <location>
        <begin position="447"/>
        <end position="456"/>
    </location>
</feature>
<feature type="region of interest" description="Interaction with target DNA" evidence="1">
    <location>
        <begin position="640"/>
        <end position="642"/>
    </location>
</feature>
<feature type="region of interest" description="Disordered" evidence="5">
    <location>
        <begin position="879"/>
        <end position="916"/>
    </location>
</feature>
<feature type="compositionally biased region" description="Polar residues" evidence="5">
    <location>
        <begin position="1"/>
        <end position="10"/>
    </location>
</feature>
<feature type="compositionally biased region" description="Basic and acidic residues" evidence="5">
    <location>
        <begin position="13"/>
        <end position="43"/>
    </location>
</feature>
<feature type="compositionally biased region" description="Polar residues" evidence="5">
    <location>
        <begin position="99"/>
        <end position="111"/>
    </location>
</feature>
<feature type="compositionally biased region" description="Basic residues" evidence="5">
    <location>
        <begin position="119"/>
        <end position="129"/>
    </location>
</feature>
<feature type="compositionally biased region" description="Basic and acidic residues" evidence="5">
    <location>
        <begin position="153"/>
        <end position="177"/>
    </location>
</feature>
<feature type="compositionally biased region" description="Polar residues" evidence="5">
    <location>
        <begin position="185"/>
        <end position="197"/>
    </location>
</feature>
<feature type="compositionally biased region" description="Basic and acidic residues" evidence="5">
    <location>
        <begin position="238"/>
        <end position="257"/>
    </location>
</feature>
<feature type="compositionally biased region" description="Polar residues" evidence="5">
    <location>
        <begin position="883"/>
        <end position="908"/>
    </location>
</feature>
<feature type="active site" description="N6-AMP-lysine intermediate" evidence="4">
    <location>
        <position position="566"/>
    </location>
</feature>
<feature type="binding site" evidence="3">
    <location>
        <position position="564"/>
    </location>
    <ligand>
        <name>ATP</name>
        <dbReference type="ChEBI" id="CHEBI:30616"/>
    </ligand>
</feature>
<feature type="binding site" evidence="3">
    <location>
        <position position="571"/>
    </location>
    <ligand>
        <name>ATP</name>
        <dbReference type="ChEBI" id="CHEBI:30616"/>
    </ligand>
</feature>
<feature type="binding site" evidence="3">
    <location>
        <position position="619"/>
    </location>
    <ligand>
        <name>ATP</name>
        <dbReference type="ChEBI" id="CHEBI:30616"/>
    </ligand>
</feature>
<feature type="binding site" evidence="1">
    <location>
        <position position="619"/>
    </location>
    <ligand>
        <name>Mg(2+)</name>
        <dbReference type="ChEBI" id="CHEBI:18420"/>
        <label>1</label>
    </ligand>
</feature>
<feature type="binding site" evidence="1">
    <location>
        <position position="718"/>
    </location>
    <ligand>
        <name>Mg(2+)</name>
        <dbReference type="ChEBI" id="CHEBI:18420"/>
        <label>2</label>
    </ligand>
</feature>
<feature type="binding site" evidence="3">
    <location>
        <position position="723"/>
    </location>
    <ligand>
        <name>ATP</name>
        <dbReference type="ChEBI" id="CHEBI:30616"/>
    </ligand>
</feature>
<feature type="binding site" evidence="3">
    <location>
        <position position="742"/>
    </location>
    <ligand>
        <name>ATP</name>
        <dbReference type="ChEBI" id="CHEBI:30616"/>
    </ligand>
</feature>
<feature type="site" description="Interaction with target DNA" evidence="1">
    <location>
        <position position="303"/>
    </location>
</feature>
<feature type="site" description="Interaction with target DNA" evidence="1">
    <location>
        <position position="588"/>
    </location>
</feature>
<feature type="site" description="Interaction with target DNA" evidence="1">
    <location>
        <position position="768"/>
    </location>
</feature>
<feature type="site" description="Interaction with target DNA" evidence="1">
    <location>
        <position position="793"/>
    </location>
</feature>
<feature type="modified residue" description="Phosphoserine" evidence="3">
    <location>
        <position position="49"/>
    </location>
</feature>
<feature type="modified residue" description="Phosphoserine" evidence="7 8 9 10">
    <location>
        <position position="51"/>
    </location>
</feature>
<feature type="modified residue" description="Phosphoserine" evidence="7 10">
    <location>
        <position position="65"/>
    </location>
</feature>
<feature type="modified residue" description="Phosphothreonine" evidence="10">
    <location>
        <position position="77"/>
    </location>
</feature>
<feature type="modified residue" description="N6-acetyllysine" evidence="11">
    <location>
        <position position="144"/>
    </location>
</feature>
<feature type="modified residue" description="Phosphothreonine" evidence="3">
    <location>
        <position position="193"/>
    </location>
</feature>
<feature type="modified residue" description="N6-acetyllysine" evidence="11">
    <location>
        <position position="225"/>
    </location>
</feature>
<feature type="modified residue" description="Phosphoserine" evidence="3">
    <location>
        <position position="228"/>
    </location>
</feature>
<feature type="modified residue" description="Phosphoserine" evidence="3">
    <location>
        <position position="229"/>
    </location>
</feature>
<feature type="modified residue" description="Phosphothreonine" evidence="3">
    <location>
        <position position="232"/>
    </location>
</feature>
<feature type="modified residue" description="Phosphothreonine" evidence="3">
    <location>
        <position position="796"/>
    </location>
</feature>
<feature type="modified residue" description="Phosphoserine" evidence="3">
    <location>
        <position position="799"/>
    </location>
</feature>
<feature type="modified residue" description="Phosphoserine" evidence="10">
    <location>
        <position position="906"/>
    </location>
</feature>
<feature type="modified residue" description="Phosphoserine" evidence="10">
    <location>
        <position position="907"/>
    </location>
</feature>
<feature type="modified residue" description="Phosphoserine" evidence="10">
    <location>
        <position position="911"/>
    </location>
</feature>